<organism>
    <name type="scientific">Mycobacterium tuberculosis (strain CDC 1551 / Oshkosh)</name>
    <dbReference type="NCBI Taxonomy" id="83331"/>
    <lineage>
        <taxon>Bacteria</taxon>
        <taxon>Bacillati</taxon>
        <taxon>Actinomycetota</taxon>
        <taxon>Actinomycetes</taxon>
        <taxon>Mycobacteriales</taxon>
        <taxon>Mycobacteriaceae</taxon>
        <taxon>Mycobacterium</taxon>
        <taxon>Mycobacterium tuberculosis complex</taxon>
    </lineage>
</organism>
<sequence>MADETTMRAGRGPGRACGRVSGVRILVVEDEPKMTALLARALTEEGHTVDTVADGRHAVAAVDGGDYDAVVLDVMLPGIDGFEVCARLRRQRVWTPVLMLTARGAVTDRIAGLDGGADDYLTKPFNLDELFARLRALSRRGPIPRPPTLEAGDLRLDPSEHRVWRADTEIRLSHKEFTLLEALIRRPGIVHTRAQLLERCWDAAYEARSNIVDVYIRYLRDKIDRPFGVTSLETIRGAGYRLRKDGGRHALPR</sequence>
<reference key="1">
    <citation type="journal article" date="2002" name="J. Bacteriol.">
        <title>Whole-genome comparison of Mycobacterium tuberculosis clinical and laboratory strains.</title>
        <authorList>
            <person name="Fleischmann R.D."/>
            <person name="Alland D."/>
            <person name="Eisen J.A."/>
            <person name="Carpenter L."/>
            <person name="White O."/>
            <person name="Peterson J.D."/>
            <person name="DeBoy R.T."/>
            <person name="Dodson R.J."/>
            <person name="Gwinn M.L."/>
            <person name="Haft D.H."/>
            <person name="Hickey E.K."/>
            <person name="Kolonay J.F."/>
            <person name="Nelson W.C."/>
            <person name="Umayam L.A."/>
            <person name="Ermolaeva M.D."/>
            <person name="Salzberg S.L."/>
            <person name="Delcher A."/>
            <person name="Utterback T.R."/>
            <person name="Weidman J.F."/>
            <person name="Khouri H.M."/>
            <person name="Gill J."/>
            <person name="Mikula A."/>
            <person name="Bishai W."/>
            <person name="Jacobs W.R. Jr."/>
            <person name="Venter J.C."/>
            <person name="Fraser C.M."/>
        </authorList>
    </citation>
    <scope>NUCLEOTIDE SEQUENCE [LARGE SCALE GENOMIC DNA]</scope>
    <source>
        <strain>CDC 1551 / Oshkosh</strain>
    </source>
</reference>
<dbReference type="EMBL" id="AE000516">
    <property type="protein sequence ID" value="AAK44855.1"/>
    <property type="status" value="ALT_INIT"/>
    <property type="molecule type" value="Genomic_DNA"/>
</dbReference>
<dbReference type="SMR" id="Q7D9K0"/>
<dbReference type="KEGG" id="mtc:MT0631"/>
<dbReference type="PATRIC" id="fig|83331.31.peg.665"/>
<dbReference type="HOGENOM" id="CLU_000445_30_1_11"/>
<dbReference type="Proteomes" id="UP000001020">
    <property type="component" value="Chromosome"/>
</dbReference>
<dbReference type="GO" id="GO:0005829">
    <property type="term" value="C:cytosol"/>
    <property type="evidence" value="ECO:0007669"/>
    <property type="project" value="TreeGrafter"/>
</dbReference>
<dbReference type="GO" id="GO:0032993">
    <property type="term" value="C:protein-DNA complex"/>
    <property type="evidence" value="ECO:0007669"/>
    <property type="project" value="TreeGrafter"/>
</dbReference>
<dbReference type="GO" id="GO:0000156">
    <property type="term" value="F:phosphorelay response regulator activity"/>
    <property type="evidence" value="ECO:0007669"/>
    <property type="project" value="TreeGrafter"/>
</dbReference>
<dbReference type="GO" id="GO:0000976">
    <property type="term" value="F:transcription cis-regulatory region binding"/>
    <property type="evidence" value="ECO:0007669"/>
    <property type="project" value="TreeGrafter"/>
</dbReference>
<dbReference type="GO" id="GO:0006355">
    <property type="term" value="P:regulation of DNA-templated transcription"/>
    <property type="evidence" value="ECO:0007669"/>
    <property type="project" value="InterPro"/>
</dbReference>
<dbReference type="CDD" id="cd00383">
    <property type="entry name" value="trans_reg_C"/>
    <property type="match status" value="1"/>
</dbReference>
<dbReference type="FunFam" id="3.40.50.2300:FF:000001">
    <property type="entry name" value="DNA-binding response regulator PhoB"/>
    <property type="match status" value="1"/>
</dbReference>
<dbReference type="FunFam" id="1.10.10.10:FF:000005">
    <property type="entry name" value="Two-component system response regulator"/>
    <property type="match status" value="1"/>
</dbReference>
<dbReference type="Gene3D" id="3.40.50.2300">
    <property type="match status" value="1"/>
</dbReference>
<dbReference type="Gene3D" id="6.10.250.690">
    <property type="match status" value="1"/>
</dbReference>
<dbReference type="Gene3D" id="1.10.10.10">
    <property type="entry name" value="Winged helix-like DNA-binding domain superfamily/Winged helix DNA-binding domain"/>
    <property type="match status" value="1"/>
</dbReference>
<dbReference type="InterPro" id="IPR011006">
    <property type="entry name" value="CheY-like_superfamily"/>
</dbReference>
<dbReference type="InterPro" id="IPR001867">
    <property type="entry name" value="OmpR/PhoB-type_DNA-bd"/>
</dbReference>
<dbReference type="InterPro" id="IPR001789">
    <property type="entry name" value="Sig_transdc_resp-reg_receiver"/>
</dbReference>
<dbReference type="InterPro" id="IPR039420">
    <property type="entry name" value="WalR-like"/>
</dbReference>
<dbReference type="InterPro" id="IPR036388">
    <property type="entry name" value="WH-like_DNA-bd_sf"/>
</dbReference>
<dbReference type="PANTHER" id="PTHR48111">
    <property type="entry name" value="REGULATOR OF RPOS"/>
    <property type="match status" value="1"/>
</dbReference>
<dbReference type="PANTHER" id="PTHR48111:SF28">
    <property type="entry name" value="TRANSCRIPTIONAL REGULATORY PROTEIN TCRX-RELATED"/>
    <property type="match status" value="1"/>
</dbReference>
<dbReference type="Pfam" id="PF00072">
    <property type="entry name" value="Response_reg"/>
    <property type="match status" value="1"/>
</dbReference>
<dbReference type="Pfam" id="PF00486">
    <property type="entry name" value="Trans_reg_C"/>
    <property type="match status" value="1"/>
</dbReference>
<dbReference type="SMART" id="SM00448">
    <property type="entry name" value="REC"/>
    <property type="match status" value="1"/>
</dbReference>
<dbReference type="SMART" id="SM00862">
    <property type="entry name" value="Trans_reg_C"/>
    <property type="match status" value="1"/>
</dbReference>
<dbReference type="SUPFAM" id="SSF52172">
    <property type="entry name" value="CheY-like"/>
    <property type="match status" value="1"/>
</dbReference>
<dbReference type="PROSITE" id="PS51755">
    <property type="entry name" value="OMPR_PHOB"/>
    <property type="match status" value="1"/>
</dbReference>
<dbReference type="PROSITE" id="PS50110">
    <property type="entry name" value="RESPONSE_REGULATORY"/>
    <property type="match status" value="1"/>
</dbReference>
<proteinExistence type="inferred from homology"/>
<comment type="function">
    <text evidence="1">Member of the two-component system HK/TcrA.</text>
</comment>
<comment type="subcellular location">
    <subcellularLocation>
        <location evidence="4">Cytoplasm</location>
    </subcellularLocation>
</comment>
<comment type="PTM">
    <text evidence="1">Phosphorylated by HK.</text>
</comment>
<comment type="sequence caution" evidence="4">
    <conflict type="erroneous initiation">
        <sequence resource="EMBL-CDS" id="AAK44855"/>
    </conflict>
</comment>
<evidence type="ECO:0000250" key="1"/>
<evidence type="ECO:0000255" key="2">
    <source>
        <dbReference type="PROSITE-ProRule" id="PRU00169"/>
    </source>
</evidence>
<evidence type="ECO:0000255" key="3">
    <source>
        <dbReference type="PROSITE-ProRule" id="PRU01091"/>
    </source>
</evidence>
<evidence type="ECO:0000305" key="4"/>
<keyword id="KW-0963">Cytoplasm</keyword>
<keyword id="KW-0238">DNA-binding</keyword>
<keyword id="KW-0597">Phosphoprotein</keyword>
<keyword id="KW-1185">Reference proteome</keyword>
<keyword id="KW-0804">Transcription</keyword>
<keyword id="KW-0805">Transcription regulation</keyword>
<keyword id="KW-0902">Two-component regulatory system</keyword>
<name>TCRA2_MYCTO</name>
<gene>
    <name type="primary">tcrA</name>
    <name type="ordered locus">MT0631</name>
</gene>
<protein>
    <recommendedName>
        <fullName>Transcriptional regulatory protein TcrA</fullName>
    </recommendedName>
</protein>
<feature type="chain" id="PRO_0000391083" description="Transcriptional regulatory protein TcrA">
    <location>
        <begin position="1"/>
        <end position="253"/>
    </location>
</feature>
<feature type="domain" description="Response regulatory" evidence="2">
    <location>
        <begin position="24"/>
        <end position="138"/>
    </location>
</feature>
<feature type="DNA-binding region" description="OmpR/PhoB-type" evidence="3">
    <location>
        <begin position="146"/>
        <end position="244"/>
    </location>
</feature>
<feature type="modified residue" description="4-aspartylphosphate" evidence="2">
    <location>
        <position position="73"/>
    </location>
</feature>
<accession>Q7D9K0</accession>